<evidence type="ECO:0000250" key="1"/>
<evidence type="ECO:0000255" key="2">
    <source>
        <dbReference type="PROSITE-ProRule" id="PRU00042"/>
    </source>
</evidence>
<evidence type="ECO:0000256" key="3">
    <source>
        <dbReference type="SAM" id="MobiDB-lite"/>
    </source>
</evidence>
<evidence type="ECO:0000305" key="4"/>
<organism>
    <name type="scientific">Saccharomyces cerevisiae (strain AWRI1631)</name>
    <name type="common">Baker's yeast</name>
    <dbReference type="NCBI Taxonomy" id="545124"/>
    <lineage>
        <taxon>Eukaryota</taxon>
        <taxon>Fungi</taxon>
        <taxon>Dikarya</taxon>
        <taxon>Ascomycota</taxon>
        <taxon>Saccharomycotina</taxon>
        <taxon>Saccharomycetes</taxon>
        <taxon>Saccharomycetales</taxon>
        <taxon>Saccharomycetaceae</taxon>
        <taxon>Saccharomyces</taxon>
    </lineage>
</organism>
<feature type="propeptide" id="PRO_0000377645">
    <location>
        <begin position="1"/>
        <end status="unknown"/>
    </location>
</feature>
<feature type="chain" id="PRO_0000377646" description="Transcription factor STP1">
    <location>
        <begin status="unknown"/>
        <end position="519"/>
    </location>
</feature>
<feature type="zinc finger region" description="C2H2-type 1" evidence="2">
    <location>
        <begin position="160"/>
        <end position="182"/>
    </location>
</feature>
<feature type="zinc finger region" description="C2H2-type 2; atypical" evidence="2">
    <location>
        <begin position="188"/>
        <end position="223"/>
    </location>
</feature>
<feature type="zinc finger region" description="C2H2-type 3; atypical" evidence="2">
    <location>
        <begin position="240"/>
        <end position="265"/>
    </location>
</feature>
<feature type="region of interest" description="I">
    <location>
        <begin position="16"/>
        <end position="35"/>
    </location>
</feature>
<feature type="region of interest" description="Disordered" evidence="3">
    <location>
        <begin position="47"/>
        <end position="69"/>
    </location>
</feature>
<feature type="region of interest" description="II">
    <location>
        <begin position="65"/>
        <end position="97"/>
    </location>
</feature>
<feature type="region of interest" description="Disordered" evidence="3">
    <location>
        <begin position="115"/>
        <end position="150"/>
    </location>
</feature>
<feature type="region of interest" description="Disordered" evidence="3">
    <location>
        <begin position="357"/>
        <end position="382"/>
    </location>
</feature>
<feature type="compositionally biased region" description="Basic and acidic residues" evidence="3">
    <location>
        <begin position="47"/>
        <end position="61"/>
    </location>
</feature>
<feature type="compositionally biased region" description="Low complexity" evidence="3">
    <location>
        <begin position="131"/>
        <end position="146"/>
    </location>
</feature>
<feature type="compositionally biased region" description="Polar residues" evidence="3">
    <location>
        <begin position="364"/>
        <end position="381"/>
    </location>
</feature>
<sequence>MPSTTLLFPQKHIRAIPGKIYAFFRELVSGVIISKPDLSHHYSCENATKEEGKDAADEEKTTTSLFPESNNIDRSLNGGCSVIPCSMDVSDLNTPISITLSPENRIKSEVNAKSLLGSRPEQDTGAPIKMSTGVTSSPLSPSGSTPEHSTKVLNNGEEEFICHYCDATFRIRGYLTRHIKKHAIEKAYHCPFFNSATPPDLRCHNSGGFSRRDTYKTHLKARHVLYPKGVKPQDRNKSSGHCAQCGEYFSTIENFVENHIESGDCKALPQGYTKKNEKRSGKLRKIKTSNGHSRFISTSQSVVEPKVLFNKDAVEAMTIVANNSSGNDIISKYGNNKLMLNSENFKVDIPKRKRKYIKKKQQQVSGSTVTTPEVATQNNQEVAPDEISSATIFSPFDTHLLEPVPSSSSESSAEVMFHGKQMKNFLIDINSFTNQQQQAQDNPSFLPLDIEQSSYDLSEDAMSYPIISTQSNRDCTQYDNTKISQILQSQLNPEYLSENHMRETQQYLNFYNDNFGSQF</sequence>
<comment type="function">
    <text evidence="1">Transcription factor involved in the regulation of gene expression in response to extracellular amino acid levels. Synthesized as latent cytoplasmic precursor, which, upon a signal initiated by the plasma membrane SPS (SSY1-PTR3-SSY5) amino acid sensor system, becomes proteolytically activated and relocates to the nucleus, where it induces the expression of SPS-sensor-regulated genes, including the amino-acid permeases AGP1, BAP2, BAP3 and GNP1. Binding to promoters is facilitated by DAL81. Involved in the repression of genes subject to nitrogen catabolite repression and genes involved in stress response. Negatively regulated by inner nuclear membrane proteins ASI1, ASI2 and ASI3, which prevent unprocessed precursor forms that escape cytoplasmic anchoring from inducing SPS-sensor-regulated genes. May be involved in pre-tRNA splicing (By similarity).</text>
</comment>
<comment type="subunit">
    <text>Interacts (via Region II) with SSY5; protease component of the SPS-sensor.</text>
</comment>
<comment type="subcellular location">
    <subcellularLocation>
        <location evidence="1">Cell membrane</location>
        <topology evidence="1">Peripheral membrane protein</topology>
        <orientation evidence="1">Cytoplasmic side</orientation>
    </subcellularLocation>
    <subcellularLocation>
        <location evidence="1">Nucleus</location>
    </subcellularLocation>
    <text evidence="1">Localizes to the cytoplasm in its unprocessed form and is targeted to the nucleus after proteolytic processing upon induction by amino acids. The SCF(MET30) ubiquitin ligase complex negatively regulates nuclear accumulation of the processed form in the absence of high extracellular methionine levels (By similarity).</text>
</comment>
<comment type="domain">
    <text evidence="1">The N-terminal inhibitory domain contains conserved sequence elements important for cytoplasmic retention (Region I) and proteolytic processing (Region II) of the protein. Region I is also required for ASI1/2/3-mediated negative regulation of transcription (By similarity).</text>
</comment>
<comment type="PTM">
    <text evidence="1">Phosphorylated by casein kinase I. Phosphorylation is not dependent on the extracellular amino acid levels, but is a prerequisite for proteolytic processing (By similarity).</text>
</comment>
<comment type="PTM">
    <text evidence="1">Activated by the amino acid-induced proteolytic removal of an N-terminal inhibitory domain by serine protease SSY5, an intrinsic component of the SPS-sensor. Processing requires at least 2 components of the SCF(GRR1) ubiquitin ligase complex, namely the F-box protein GRR1 and the E2 enzyme CDC34, but does not depend on the proteasome. Processing is negatively regulated by the protein phosphatase 2A regulatory subunit RTS1 (By similarity).</text>
</comment>
<comment type="sequence caution" evidence="4">
    <conflict type="erroneous initiation">
        <sequence resource="EMBL-CDS" id="EDZ72805"/>
    </conflict>
</comment>
<reference key="1">
    <citation type="journal article" date="2008" name="FEMS Yeast Res.">
        <title>Comparative genome analysis of a Saccharomyces cerevisiae wine strain.</title>
        <authorList>
            <person name="Borneman A.R."/>
            <person name="Forgan A.H."/>
            <person name="Pretorius I.S."/>
            <person name="Chambers P.J."/>
        </authorList>
    </citation>
    <scope>NUCLEOTIDE SEQUENCE [LARGE SCALE GENOMIC DNA]</scope>
    <source>
        <strain>AWRI1631</strain>
    </source>
</reference>
<protein>
    <recommendedName>
        <fullName>Transcription factor STP1</fullName>
    </recommendedName>
</protein>
<gene>
    <name type="primary">STP1</name>
    <name type="ORF">AWRI1631_46800</name>
</gene>
<dbReference type="EMBL" id="ABSV01000581">
    <property type="protein sequence ID" value="EDZ72805.1"/>
    <property type="status" value="ALT_INIT"/>
    <property type="molecule type" value="Genomic_DNA"/>
</dbReference>
<dbReference type="OrthoDB" id="41314at4893"/>
<dbReference type="Proteomes" id="UP000008988">
    <property type="component" value="Unassembled WGS sequence"/>
</dbReference>
<dbReference type="GO" id="GO:0005634">
    <property type="term" value="C:nucleus"/>
    <property type="evidence" value="ECO:0007669"/>
    <property type="project" value="UniProtKB-SubCell"/>
</dbReference>
<dbReference type="GO" id="GO:0005886">
    <property type="term" value="C:plasma membrane"/>
    <property type="evidence" value="ECO:0007669"/>
    <property type="project" value="UniProtKB-SubCell"/>
</dbReference>
<dbReference type="GO" id="GO:0000981">
    <property type="term" value="F:DNA-binding transcription factor activity, RNA polymerase II-specific"/>
    <property type="evidence" value="ECO:0007669"/>
    <property type="project" value="TreeGrafter"/>
</dbReference>
<dbReference type="GO" id="GO:0000978">
    <property type="term" value="F:RNA polymerase II cis-regulatory region sequence-specific DNA binding"/>
    <property type="evidence" value="ECO:0007669"/>
    <property type="project" value="TreeGrafter"/>
</dbReference>
<dbReference type="GO" id="GO:0008270">
    <property type="term" value="F:zinc ion binding"/>
    <property type="evidence" value="ECO:0007669"/>
    <property type="project" value="UniProtKB-KW"/>
</dbReference>
<dbReference type="GO" id="GO:0008033">
    <property type="term" value="P:tRNA processing"/>
    <property type="evidence" value="ECO:0007669"/>
    <property type="project" value="UniProtKB-KW"/>
</dbReference>
<dbReference type="FunFam" id="3.30.160.60:FF:002194">
    <property type="entry name" value="STP1p Transcription factor"/>
    <property type="match status" value="1"/>
</dbReference>
<dbReference type="Gene3D" id="3.30.160.60">
    <property type="entry name" value="Classic Zinc Finger"/>
    <property type="match status" value="1"/>
</dbReference>
<dbReference type="InterPro" id="IPR051643">
    <property type="entry name" value="Transcr_Reg_ZincFinger"/>
</dbReference>
<dbReference type="InterPro" id="IPR036236">
    <property type="entry name" value="Znf_C2H2_sf"/>
</dbReference>
<dbReference type="InterPro" id="IPR013087">
    <property type="entry name" value="Znf_C2H2_type"/>
</dbReference>
<dbReference type="PANTHER" id="PTHR24396:SF19">
    <property type="entry name" value="FI01119P"/>
    <property type="match status" value="1"/>
</dbReference>
<dbReference type="PANTHER" id="PTHR24396">
    <property type="entry name" value="ZINC FINGER PROTEIN"/>
    <property type="match status" value="1"/>
</dbReference>
<dbReference type="SMART" id="SM00355">
    <property type="entry name" value="ZnF_C2H2"/>
    <property type="match status" value="2"/>
</dbReference>
<dbReference type="SUPFAM" id="SSF57667">
    <property type="entry name" value="beta-beta-alpha zinc fingers"/>
    <property type="match status" value="1"/>
</dbReference>
<dbReference type="PROSITE" id="PS00028">
    <property type="entry name" value="ZINC_FINGER_C2H2_1"/>
    <property type="match status" value="1"/>
</dbReference>
<dbReference type="PROSITE" id="PS50157">
    <property type="entry name" value="ZINC_FINGER_C2H2_2"/>
    <property type="match status" value="1"/>
</dbReference>
<proteinExistence type="inferred from homology"/>
<accession>B5VGZ3</accession>
<name>STP1_YEAS6</name>
<keyword id="KW-1003">Cell membrane</keyword>
<keyword id="KW-0238">DNA-binding</keyword>
<keyword id="KW-0472">Membrane</keyword>
<keyword id="KW-0479">Metal-binding</keyword>
<keyword id="KW-0539">Nucleus</keyword>
<keyword id="KW-0597">Phosphoprotein</keyword>
<keyword id="KW-0677">Repeat</keyword>
<keyword id="KW-0819">tRNA processing</keyword>
<keyword id="KW-0862">Zinc</keyword>
<keyword id="KW-0863">Zinc-finger</keyword>
<keyword id="KW-0865">Zymogen</keyword>